<name>NU2M_PANPA</name>
<gene>
    <name evidence="1" type="primary">MT-ND2</name>
    <name type="synonym">MTND2</name>
    <name type="synonym">NADH2</name>
    <name type="synonym">ND2</name>
</gene>
<feature type="chain" id="PRO_0000117616" description="NADH-ubiquinone oxidoreductase chain 2">
    <location>
        <begin position="1"/>
        <end position="347"/>
    </location>
</feature>
<feature type="transmembrane region" description="Helical" evidence="3">
    <location>
        <begin position="13"/>
        <end position="33"/>
    </location>
</feature>
<feature type="transmembrane region" description="Helical" evidence="3">
    <location>
        <begin position="55"/>
        <end position="75"/>
    </location>
</feature>
<feature type="transmembrane region" description="Helical" evidence="3">
    <location>
        <begin position="96"/>
        <end position="116"/>
    </location>
</feature>
<feature type="transmembrane region" description="Helical" evidence="3">
    <location>
        <begin position="123"/>
        <end position="143"/>
    </location>
</feature>
<feature type="transmembrane region" description="Helical" evidence="3">
    <location>
        <begin position="149"/>
        <end position="169"/>
    </location>
</feature>
<feature type="transmembrane region" description="Helical" evidence="3">
    <location>
        <begin position="178"/>
        <end position="198"/>
    </location>
</feature>
<feature type="transmembrane region" description="Helical" evidence="3">
    <location>
        <begin position="201"/>
        <end position="221"/>
    </location>
</feature>
<feature type="transmembrane region" description="Helical" evidence="3">
    <location>
        <begin position="247"/>
        <end position="267"/>
    </location>
</feature>
<feature type="transmembrane region" description="Helical" evidence="3">
    <location>
        <begin position="274"/>
        <end position="294"/>
    </location>
</feature>
<feature type="transmembrane region" description="Helical" evidence="3">
    <location>
        <begin position="326"/>
        <end position="346"/>
    </location>
</feature>
<sequence length="347" mass="39073">MNPLAQPIIYSTIFAGTFITVLSSHWFFTWVGLEMNMLAFIPVLTKKMSPRSTEAAIKYFLTQATASMILLMAILSNNMLSGQWTMTNTTNQYSSLMIMTAMAMKLGMAPFHFWVPEVTQGTPLMSGLLLLTWQKLAPISIMYQMSSSLNVNLLLTLSILSIMAGSWGGLNQTQLRKILAYSSITHMGWMMAVLPYNPNMTILNLTIYIILTTTTFLLLNLNSSTTTLLLSRTWNKLTWLTPLIPSTLLSLGGLPPLTGFLPKWVIIEEFTKNNSLIIPTTMAIITLLNLYFYLRLIYSTSITLLPMSNNVKMKWQFEHTKPTPFLPTLITLTTLLLPISPFMLMIL</sequence>
<evidence type="ECO:0000250" key="1">
    <source>
        <dbReference type="UniProtKB" id="P03891"/>
    </source>
</evidence>
<evidence type="ECO:0000250" key="2">
    <source>
        <dbReference type="UniProtKB" id="P03892"/>
    </source>
</evidence>
<evidence type="ECO:0000255" key="3"/>
<evidence type="ECO:0000305" key="4"/>
<geneLocation type="mitochondrion"/>
<keyword id="KW-0249">Electron transport</keyword>
<keyword id="KW-0472">Membrane</keyword>
<keyword id="KW-0496">Mitochondrion</keyword>
<keyword id="KW-0999">Mitochondrion inner membrane</keyword>
<keyword id="KW-0520">NAD</keyword>
<keyword id="KW-1185">Reference proteome</keyword>
<keyword id="KW-0679">Respiratory chain</keyword>
<keyword id="KW-1278">Translocase</keyword>
<keyword id="KW-0812">Transmembrane</keyword>
<keyword id="KW-1133">Transmembrane helix</keyword>
<keyword id="KW-0813">Transport</keyword>
<keyword id="KW-0830">Ubiquinone</keyword>
<protein>
    <recommendedName>
        <fullName evidence="1">NADH-ubiquinone oxidoreductase chain 2</fullName>
        <ecNumber evidence="1">7.1.1.2</ecNumber>
    </recommendedName>
    <alternativeName>
        <fullName>NADH dehydrogenase subunit 2</fullName>
    </alternativeName>
</protein>
<organism>
    <name type="scientific">Pan paniscus</name>
    <name type="common">Pygmy chimpanzee</name>
    <name type="synonym">Bonobo</name>
    <dbReference type="NCBI Taxonomy" id="9597"/>
    <lineage>
        <taxon>Eukaryota</taxon>
        <taxon>Metazoa</taxon>
        <taxon>Chordata</taxon>
        <taxon>Craniata</taxon>
        <taxon>Vertebrata</taxon>
        <taxon>Euteleostomi</taxon>
        <taxon>Mammalia</taxon>
        <taxon>Eutheria</taxon>
        <taxon>Euarchontoglires</taxon>
        <taxon>Primates</taxon>
        <taxon>Haplorrhini</taxon>
        <taxon>Catarrhini</taxon>
        <taxon>Hominidae</taxon>
        <taxon>Pan</taxon>
    </lineage>
</organism>
<accession>Q9T9X1</accession>
<comment type="function">
    <text evidence="1">Core subunit of the mitochondrial membrane respiratory chain NADH dehydrogenase (Complex I) which catalyzes electron transfer from NADH through the respiratory chain, using ubiquinone as an electron acceptor. Essential for the catalytic activity and assembly of complex I.</text>
</comment>
<comment type="catalytic activity">
    <reaction evidence="1">
        <text>a ubiquinone + NADH + 5 H(+)(in) = a ubiquinol + NAD(+) + 4 H(+)(out)</text>
        <dbReference type="Rhea" id="RHEA:29091"/>
        <dbReference type="Rhea" id="RHEA-COMP:9565"/>
        <dbReference type="Rhea" id="RHEA-COMP:9566"/>
        <dbReference type="ChEBI" id="CHEBI:15378"/>
        <dbReference type="ChEBI" id="CHEBI:16389"/>
        <dbReference type="ChEBI" id="CHEBI:17976"/>
        <dbReference type="ChEBI" id="CHEBI:57540"/>
        <dbReference type="ChEBI" id="CHEBI:57945"/>
        <dbReference type="EC" id="7.1.1.2"/>
    </reaction>
</comment>
<comment type="subunit">
    <text evidence="1 2">Core subunit of respiratory chain NADH dehydrogenase (Complex I) which is composed of 45 different subunits. Interacts with TMEM242 (By similarity).</text>
</comment>
<comment type="subcellular location">
    <subcellularLocation>
        <location evidence="2">Mitochondrion inner membrane</location>
        <topology evidence="3">Multi-pass membrane protein</topology>
    </subcellularLocation>
</comment>
<comment type="similarity">
    <text evidence="4">Belongs to the complex I subunit 2 family.</text>
</comment>
<proteinExistence type="inferred from homology"/>
<reference key="1">
    <citation type="journal article" date="1995" name="Proc. Natl. Acad. Sci. U.S.A.">
        <title>Recent African origin of modern humans revealed by complete sequences of hominoid mitochondrial DNAs.</title>
        <authorList>
            <person name="Horai S."/>
            <person name="Hayasaka K."/>
            <person name="Kondo R."/>
            <person name="Tsugane K."/>
            <person name="Takahata N."/>
        </authorList>
    </citation>
    <scope>NUCLEOTIDE SEQUENCE [GENOMIC DNA]</scope>
</reference>
<reference key="2">
    <citation type="journal article" date="2002" name="Proc. Natl. Acad. Sci. U.S.A.">
        <title>High levels of Y-chromosome nucleotide diversity in the genus Pan.</title>
        <authorList>
            <person name="Stone A.C."/>
            <person name="Griffiths R.C."/>
            <person name="Zegura S.L."/>
            <person name="Hammer M.F."/>
        </authorList>
    </citation>
    <scope>NUCLEOTIDE SEQUENCE [GENOMIC DNA]</scope>
</reference>
<dbReference type="EC" id="7.1.1.2" evidence="1"/>
<dbReference type="EMBL" id="D38116">
    <property type="protein sequence ID" value="BAA85295.1"/>
    <property type="molecule type" value="Genomic_DNA"/>
</dbReference>
<dbReference type="EMBL" id="AF440166">
    <property type="protein sequence ID" value="AAN31635.1"/>
    <property type="molecule type" value="Genomic_DNA"/>
</dbReference>
<dbReference type="RefSeq" id="NP_008200.1">
    <property type="nucleotide sequence ID" value="NC_001644.1"/>
</dbReference>
<dbReference type="SMR" id="Q9T9X1"/>
<dbReference type="STRING" id="9597.ENSPPAP00000000002"/>
<dbReference type="Ensembl" id="ENSPPAT00000000010.1">
    <property type="protein sequence ID" value="ENSPPAP00000000002.1"/>
    <property type="gene ID" value="ENSPPAG00000000010.1"/>
</dbReference>
<dbReference type="GeneID" id="807883"/>
<dbReference type="KEGG" id="pps:807883"/>
<dbReference type="CTD" id="4536"/>
<dbReference type="GeneTree" id="ENSGT00730000111348"/>
<dbReference type="OMA" id="HFWVPEV"/>
<dbReference type="Proteomes" id="UP000240080">
    <property type="component" value="Mitochondrion"/>
</dbReference>
<dbReference type="Bgee" id="ENSPPAG00000000010">
    <property type="expression patterns" value="Expressed in cerebellum and 6 other cell types or tissues"/>
</dbReference>
<dbReference type="GO" id="GO:0005743">
    <property type="term" value="C:mitochondrial inner membrane"/>
    <property type="evidence" value="ECO:0000250"/>
    <property type="project" value="UniProtKB"/>
</dbReference>
<dbReference type="GO" id="GO:0045271">
    <property type="term" value="C:respiratory chain complex I"/>
    <property type="evidence" value="ECO:0007669"/>
    <property type="project" value="Ensembl"/>
</dbReference>
<dbReference type="GO" id="GO:0008137">
    <property type="term" value="F:NADH dehydrogenase (ubiquinone) activity"/>
    <property type="evidence" value="ECO:0000250"/>
    <property type="project" value="UniProtKB"/>
</dbReference>
<dbReference type="GO" id="GO:0006120">
    <property type="term" value="P:mitochondrial electron transport, NADH to ubiquinone"/>
    <property type="evidence" value="ECO:0000250"/>
    <property type="project" value="UniProtKB"/>
</dbReference>
<dbReference type="GO" id="GO:0032981">
    <property type="term" value="P:mitochondrial respiratory chain complex I assembly"/>
    <property type="evidence" value="ECO:0000250"/>
    <property type="project" value="UniProtKB"/>
</dbReference>
<dbReference type="GO" id="GO:0072593">
    <property type="term" value="P:reactive oxygen species metabolic process"/>
    <property type="evidence" value="ECO:0007669"/>
    <property type="project" value="Ensembl"/>
</dbReference>
<dbReference type="InterPro" id="IPR050175">
    <property type="entry name" value="Complex_I_Subunit_2"/>
</dbReference>
<dbReference type="InterPro" id="IPR010933">
    <property type="entry name" value="NADH_DH_su2_C"/>
</dbReference>
<dbReference type="InterPro" id="IPR003917">
    <property type="entry name" value="NADH_UbQ_OxRdtase_chain2"/>
</dbReference>
<dbReference type="InterPro" id="IPR001750">
    <property type="entry name" value="ND/Mrp_TM"/>
</dbReference>
<dbReference type="PANTHER" id="PTHR46552">
    <property type="entry name" value="NADH-UBIQUINONE OXIDOREDUCTASE CHAIN 2"/>
    <property type="match status" value="1"/>
</dbReference>
<dbReference type="PANTHER" id="PTHR46552:SF1">
    <property type="entry name" value="NADH-UBIQUINONE OXIDOREDUCTASE CHAIN 2"/>
    <property type="match status" value="1"/>
</dbReference>
<dbReference type="Pfam" id="PF06444">
    <property type="entry name" value="NADH_dehy_S2_C"/>
    <property type="match status" value="1"/>
</dbReference>
<dbReference type="Pfam" id="PF00361">
    <property type="entry name" value="Proton_antipo_M"/>
    <property type="match status" value="1"/>
</dbReference>
<dbReference type="PRINTS" id="PR01436">
    <property type="entry name" value="NADHDHGNASE2"/>
</dbReference>